<comment type="function">
    <text evidence="1">One of several proteins that assist in the late maturation steps of the functional core of the 30S ribosomal subunit. Associates with free 30S ribosomal subunits (but not with 30S subunits that are part of 70S ribosomes or polysomes). Required for efficient processing of 16S rRNA. May interact with the 5'-terminal helix region of 16S rRNA.</text>
</comment>
<comment type="subunit">
    <text evidence="1">Monomer. Binds 30S ribosomal subunits, but not 50S ribosomal subunits or 70S ribosomes.</text>
</comment>
<comment type="subcellular location">
    <subcellularLocation>
        <location evidence="1">Cytoplasm</location>
    </subcellularLocation>
</comment>
<comment type="similarity">
    <text evidence="1">Belongs to the RbfA family.</text>
</comment>
<gene>
    <name evidence="1" type="primary">rbfA</name>
    <name type="ordered locus">ETA_03480</name>
</gene>
<proteinExistence type="inferred from homology"/>
<keyword id="KW-0963">Cytoplasm</keyword>
<keyword id="KW-1185">Reference proteome</keyword>
<keyword id="KW-0690">Ribosome biogenesis</keyword>
<evidence type="ECO:0000255" key="1">
    <source>
        <dbReference type="HAMAP-Rule" id="MF_00003"/>
    </source>
</evidence>
<name>RBFA_ERWT9</name>
<organism>
    <name type="scientific">Erwinia tasmaniensis (strain DSM 17950 / CFBP 7177 / CIP 109463 / NCPPB 4357 / Et1/99)</name>
    <dbReference type="NCBI Taxonomy" id="465817"/>
    <lineage>
        <taxon>Bacteria</taxon>
        <taxon>Pseudomonadati</taxon>
        <taxon>Pseudomonadota</taxon>
        <taxon>Gammaproteobacteria</taxon>
        <taxon>Enterobacterales</taxon>
        <taxon>Erwiniaceae</taxon>
        <taxon>Erwinia</taxon>
    </lineage>
</organism>
<sequence length="137" mass="15388">MAKEFGRPQRVSQELQKEIAIILQREIKDPRLGMMVTVSGVDVSRDLAYAKVFVTFLNDKDEAAIKGGLRALGDASGYIRTLLGKAMRLRIVPELTFFYDNSLVEGMRMSNLVTNVVRNDEERRGPAEENPEEGKAE</sequence>
<feature type="chain" id="PRO_1000088889" description="Ribosome-binding factor A">
    <location>
        <begin position="1"/>
        <end position="137"/>
    </location>
</feature>
<accession>B2VGN3</accession>
<reference key="1">
    <citation type="journal article" date="2008" name="Environ. Microbiol.">
        <title>The genome of Erwinia tasmaniensis strain Et1/99, a non-pathogenic bacterium in the genus Erwinia.</title>
        <authorList>
            <person name="Kube M."/>
            <person name="Migdoll A.M."/>
            <person name="Mueller I."/>
            <person name="Kuhl H."/>
            <person name="Beck A."/>
            <person name="Reinhardt R."/>
            <person name="Geider K."/>
        </authorList>
    </citation>
    <scope>NUCLEOTIDE SEQUENCE [LARGE SCALE GENOMIC DNA]</scope>
    <source>
        <strain>DSM 17950 / CFBP 7177 / CIP 109463 / NCPPB 4357 / Et1/99</strain>
    </source>
</reference>
<dbReference type="EMBL" id="CU468135">
    <property type="protein sequence ID" value="CAO95394.1"/>
    <property type="molecule type" value="Genomic_DNA"/>
</dbReference>
<dbReference type="RefSeq" id="WP_012440109.1">
    <property type="nucleotide sequence ID" value="NC_010694.1"/>
</dbReference>
<dbReference type="SMR" id="B2VGN3"/>
<dbReference type="STRING" id="465817.ETA_03480"/>
<dbReference type="KEGG" id="eta:ETA_03480"/>
<dbReference type="eggNOG" id="COG0858">
    <property type="taxonomic scope" value="Bacteria"/>
</dbReference>
<dbReference type="HOGENOM" id="CLU_089475_5_0_6"/>
<dbReference type="OrthoDB" id="307788at2"/>
<dbReference type="Proteomes" id="UP000001726">
    <property type="component" value="Chromosome"/>
</dbReference>
<dbReference type="GO" id="GO:0005829">
    <property type="term" value="C:cytosol"/>
    <property type="evidence" value="ECO:0007669"/>
    <property type="project" value="TreeGrafter"/>
</dbReference>
<dbReference type="GO" id="GO:0043024">
    <property type="term" value="F:ribosomal small subunit binding"/>
    <property type="evidence" value="ECO:0007669"/>
    <property type="project" value="TreeGrafter"/>
</dbReference>
<dbReference type="GO" id="GO:0030490">
    <property type="term" value="P:maturation of SSU-rRNA"/>
    <property type="evidence" value="ECO:0007669"/>
    <property type="project" value="UniProtKB-UniRule"/>
</dbReference>
<dbReference type="FunFam" id="3.30.300.20:FF:000007">
    <property type="entry name" value="Ribosome-binding factor A"/>
    <property type="match status" value="1"/>
</dbReference>
<dbReference type="Gene3D" id="3.30.300.20">
    <property type="match status" value="1"/>
</dbReference>
<dbReference type="HAMAP" id="MF_00003">
    <property type="entry name" value="RbfA"/>
    <property type="match status" value="1"/>
</dbReference>
<dbReference type="InterPro" id="IPR015946">
    <property type="entry name" value="KH_dom-like_a/b"/>
</dbReference>
<dbReference type="InterPro" id="IPR000238">
    <property type="entry name" value="RbfA"/>
</dbReference>
<dbReference type="InterPro" id="IPR023799">
    <property type="entry name" value="RbfA_dom_sf"/>
</dbReference>
<dbReference type="InterPro" id="IPR020053">
    <property type="entry name" value="Ribosome-bd_factorA_CS"/>
</dbReference>
<dbReference type="NCBIfam" id="TIGR00082">
    <property type="entry name" value="rbfA"/>
    <property type="match status" value="1"/>
</dbReference>
<dbReference type="PANTHER" id="PTHR33515">
    <property type="entry name" value="RIBOSOME-BINDING FACTOR A, CHLOROPLASTIC-RELATED"/>
    <property type="match status" value="1"/>
</dbReference>
<dbReference type="PANTHER" id="PTHR33515:SF1">
    <property type="entry name" value="RIBOSOME-BINDING FACTOR A, CHLOROPLASTIC-RELATED"/>
    <property type="match status" value="1"/>
</dbReference>
<dbReference type="Pfam" id="PF02033">
    <property type="entry name" value="RBFA"/>
    <property type="match status" value="1"/>
</dbReference>
<dbReference type="SUPFAM" id="SSF89919">
    <property type="entry name" value="Ribosome-binding factor A, RbfA"/>
    <property type="match status" value="1"/>
</dbReference>
<dbReference type="PROSITE" id="PS01319">
    <property type="entry name" value="RBFA"/>
    <property type="match status" value="1"/>
</dbReference>
<protein>
    <recommendedName>
        <fullName evidence="1">Ribosome-binding factor A</fullName>
    </recommendedName>
</protein>